<evidence type="ECO:0000255" key="1">
    <source>
        <dbReference type="HAMAP-Rule" id="MF_01068"/>
    </source>
</evidence>
<proteinExistence type="inferred from homology"/>
<reference key="1">
    <citation type="journal article" date="2005" name="Nucleic Acids Res.">
        <title>Genome dynamics and diversity of Shigella species, the etiologic agents of bacillary dysentery.</title>
        <authorList>
            <person name="Yang F."/>
            <person name="Yang J."/>
            <person name="Zhang X."/>
            <person name="Chen L."/>
            <person name="Jiang Y."/>
            <person name="Yan Y."/>
            <person name="Tang X."/>
            <person name="Wang J."/>
            <person name="Xiong Z."/>
            <person name="Dong J."/>
            <person name="Xue Y."/>
            <person name="Zhu Y."/>
            <person name="Xu X."/>
            <person name="Sun L."/>
            <person name="Chen S."/>
            <person name="Nie H."/>
            <person name="Peng J."/>
            <person name="Xu J."/>
            <person name="Wang Y."/>
            <person name="Yuan Z."/>
            <person name="Wen Y."/>
            <person name="Yao Z."/>
            <person name="Shen Y."/>
            <person name="Qiang B."/>
            <person name="Hou Y."/>
            <person name="Yu J."/>
            <person name="Jin Q."/>
        </authorList>
    </citation>
    <scope>NUCLEOTIDE SEQUENCE [LARGE SCALE GENOMIC DNA]</scope>
    <source>
        <strain>Sd197</strain>
    </source>
</reference>
<sequence>MDRRRFIKGSMAMAAVCGTSGIASLFSQAAFAADPDIADGQTQRFDFSILQSMAHDLAQTAWRGAPRPLPDTLATMTPQAYNSIQYDAEKSLWHNVENRQLDAQFFHMGMGFRRRVRMFSVDPATHLAREIHFRPELFKYNDAGVDTKQLEGQSDLGFAGFRVFKAPELARRDVVSFLGASYFRAVDDTYQYGLSARGLAIDTYTDSKEEFPDFTAFWFDTVKPGATTFTVYALLDSASITGAYKFTIHCEKSQVIMDVENHLYARKDIKQLGIAPMTSMFSCGTNERRMCDAIHPQIHDSDRLSMWRGNGEWICRPLNNPQKLQFNAYTDNNPKGFGLLQLDRDFSHYQDIMGWYNKRPSLWVEPRNKWGKGTIGLMEIPTTGETLDNIVCFWQPEKAVKAGDEFAFQYRLYWSAQPPVHCPLARVMATRTGMGGFPEGWAPGEHYPEKWARRFAVDFVGGDLKAAAPKGIEPVITLSSGEAKQIEILYIEPIDGYRIQFDWYPTSDSTDPVDMRMYLRCQGDAISETWLYQYFPPAPDKRQYVDDRVMS</sequence>
<name>OPGD_SHIDS</name>
<gene>
    <name evidence="1" type="primary">mdoD</name>
    <name evidence="1" type="synonym">opgD</name>
    <name type="ordered locus">SDY_1756</name>
</gene>
<protein>
    <recommendedName>
        <fullName evidence="1">Glucans biosynthesis protein D</fullName>
    </recommendedName>
</protein>
<accession>Q32FN2</accession>
<dbReference type="EMBL" id="CP000034">
    <property type="protein sequence ID" value="ABB61873.1"/>
    <property type="molecule type" value="Genomic_DNA"/>
</dbReference>
<dbReference type="RefSeq" id="WP_000375932.1">
    <property type="nucleotide sequence ID" value="NC_007606.1"/>
</dbReference>
<dbReference type="RefSeq" id="YP_403364.1">
    <property type="nucleotide sequence ID" value="NC_007606.1"/>
</dbReference>
<dbReference type="SMR" id="Q32FN2"/>
<dbReference type="STRING" id="300267.SDY_1756"/>
<dbReference type="EnsemblBacteria" id="ABB61873">
    <property type="protein sequence ID" value="ABB61873"/>
    <property type="gene ID" value="SDY_1756"/>
</dbReference>
<dbReference type="KEGG" id="sdy:SDY_1756"/>
<dbReference type="PATRIC" id="fig|300267.13.peg.2115"/>
<dbReference type="HOGENOM" id="CLU_023403_2_0_6"/>
<dbReference type="UniPathway" id="UPA00637"/>
<dbReference type="Proteomes" id="UP000002716">
    <property type="component" value="Chromosome"/>
</dbReference>
<dbReference type="GO" id="GO:0030288">
    <property type="term" value="C:outer membrane-bounded periplasmic space"/>
    <property type="evidence" value="ECO:0007669"/>
    <property type="project" value="TreeGrafter"/>
</dbReference>
<dbReference type="GO" id="GO:0030246">
    <property type="term" value="F:carbohydrate binding"/>
    <property type="evidence" value="ECO:0007669"/>
    <property type="project" value="InterPro"/>
</dbReference>
<dbReference type="GO" id="GO:0003824">
    <property type="term" value="F:catalytic activity"/>
    <property type="evidence" value="ECO:0007669"/>
    <property type="project" value="InterPro"/>
</dbReference>
<dbReference type="GO" id="GO:0051274">
    <property type="term" value="P:beta-glucan biosynthetic process"/>
    <property type="evidence" value="ECO:0007669"/>
    <property type="project" value="TreeGrafter"/>
</dbReference>
<dbReference type="FunFam" id="2.60.40.10:FF:000379">
    <property type="entry name" value="Glucans biosynthesis protein D"/>
    <property type="match status" value="1"/>
</dbReference>
<dbReference type="FunFam" id="2.70.98.10:FF:000004">
    <property type="entry name" value="Glucans biosynthesis protein D"/>
    <property type="match status" value="1"/>
</dbReference>
<dbReference type="Gene3D" id="2.70.98.10">
    <property type="match status" value="1"/>
</dbReference>
<dbReference type="Gene3D" id="2.60.40.10">
    <property type="entry name" value="Immunoglobulins"/>
    <property type="match status" value="1"/>
</dbReference>
<dbReference type="HAMAP" id="MF_01068">
    <property type="entry name" value="MdoD_OpgD"/>
    <property type="match status" value="1"/>
</dbReference>
<dbReference type="InterPro" id="IPR011013">
    <property type="entry name" value="Gal_mutarotase_sf_dom"/>
</dbReference>
<dbReference type="InterPro" id="IPR014718">
    <property type="entry name" value="GH-type_carb-bd"/>
</dbReference>
<dbReference type="InterPro" id="IPR023724">
    <property type="entry name" value="Glucan_biosyn_MdoD"/>
</dbReference>
<dbReference type="InterPro" id="IPR014438">
    <property type="entry name" value="Glucan_biosyn_MdoG/MdoD"/>
</dbReference>
<dbReference type="InterPro" id="IPR007444">
    <property type="entry name" value="Glucan_biosyn_MdoG_C"/>
</dbReference>
<dbReference type="InterPro" id="IPR013783">
    <property type="entry name" value="Ig-like_fold"/>
</dbReference>
<dbReference type="InterPro" id="IPR014756">
    <property type="entry name" value="Ig_E-set"/>
</dbReference>
<dbReference type="InterPro" id="IPR006311">
    <property type="entry name" value="TAT_signal"/>
</dbReference>
<dbReference type="InterPro" id="IPR019546">
    <property type="entry name" value="TAT_signal_bac_arc"/>
</dbReference>
<dbReference type="NCBIfam" id="TIGR01409">
    <property type="entry name" value="TAT_signal_seq"/>
    <property type="match status" value="1"/>
</dbReference>
<dbReference type="PANTHER" id="PTHR30504">
    <property type="entry name" value="GLUCANS BIOSYNTHESIS PROTEIN"/>
    <property type="match status" value="1"/>
</dbReference>
<dbReference type="PANTHER" id="PTHR30504:SF3">
    <property type="entry name" value="GLUCANS BIOSYNTHESIS PROTEIN D"/>
    <property type="match status" value="1"/>
</dbReference>
<dbReference type="Pfam" id="PF04349">
    <property type="entry name" value="MdoG"/>
    <property type="match status" value="1"/>
</dbReference>
<dbReference type="PIRSF" id="PIRSF006281">
    <property type="entry name" value="MdoG"/>
    <property type="match status" value="1"/>
</dbReference>
<dbReference type="SUPFAM" id="SSF81296">
    <property type="entry name" value="E set domains"/>
    <property type="match status" value="1"/>
</dbReference>
<dbReference type="SUPFAM" id="SSF74650">
    <property type="entry name" value="Galactose mutarotase-like"/>
    <property type="match status" value="1"/>
</dbReference>
<dbReference type="PROSITE" id="PS51318">
    <property type="entry name" value="TAT"/>
    <property type="match status" value="1"/>
</dbReference>
<feature type="signal peptide" description="Tat-type signal" evidence="1">
    <location>
        <begin position="1"/>
        <end position="32"/>
    </location>
</feature>
<feature type="chain" id="PRO_1000064553" description="Glucans biosynthesis protein D">
    <location>
        <begin position="33"/>
        <end position="551"/>
    </location>
</feature>
<keyword id="KW-0574">Periplasm</keyword>
<keyword id="KW-1185">Reference proteome</keyword>
<keyword id="KW-0732">Signal</keyword>
<comment type="function">
    <text evidence="1">Probably involved in the control of the structural glucose backbone of osmoregulated periplasmic glucans (OPGs).</text>
</comment>
<comment type="pathway">
    <text evidence="1">Glycan metabolism; osmoregulated periplasmic glucan (OPG) biosynthesis.</text>
</comment>
<comment type="subcellular location">
    <subcellularLocation>
        <location evidence="1">Periplasm</location>
    </subcellularLocation>
</comment>
<comment type="PTM">
    <text>Predicted to be exported by the Tat system. The position of the signal peptide cleavage has not been experimentally proven.</text>
</comment>
<comment type="similarity">
    <text evidence="1">Belongs to the OpgD/OpgG family.</text>
</comment>
<organism>
    <name type="scientific">Shigella dysenteriae serotype 1 (strain Sd197)</name>
    <dbReference type="NCBI Taxonomy" id="300267"/>
    <lineage>
        <taxon>Bacteria</taxon>
        <taxon>Pseudomonadati</taxon>
        <taxon>Pseudomonadota</taxon>
        <taxon>Gammaproteobacteria</taxon>
        <taxon>Enterobacterales</taxon>
        <taxon>Enterobacteriaceae</taxon>
        <taxon>Shigella</taxon>
    </lineage>
</organism>